<gene>
    <name evidence="6" type="primary">PT8</name>
    <name evidence="8" type="ordered locus">MTR_5g068140</name>
    <name evidence="9" type="ORF">MtrunA17_Chr5g0428481</name>
</gene>
<feature type="chain" id="PRO_0000450033" description="Low affinity inorganic phosphate transporter 8">
    <location>
        <begin position="1"/>
        <end position="557"/>
    </location>
</feature>
<feature type="topological domain" description="Cytoplasmic" evidence="7">
    <location>
        <begin position="1"/>
        <end position="20"/>
    </location>
</feature>
<feature type="transmembrane region" description="Helical" evidence="2">
    <location>
        <begin position="21"/>
        <end position="41"/>
    </location>
</feature>
<feature type="topological domain" description="Extracellular" evidence="7">
    <location>
        <begin position="42"/>
        <end position="70"/>
    </location>
</feature>
<feature type="transmembrane region" description="Helical" evidence="2">
    <location>
        <begin position="71"/>
        <end position="91"/>
    </location>
</feature>
<feature type="topological domain" description="Cytoplasmic" evidence="7">
    <location>
        <begin position="92"/>
        <end position="98"/>
    </location>
</feature>
<feature type="transmembrane region" description="Helical" evidence="2">
    <location>
        <begin position="99"/>
        <end position="119"/>
    </location>
</feature>
<feature type="topological domain" description="Extracellular" evidence="7">
    <location>
        <begin position="120"/>
        <end position="130"/>
    </location>
</feature>
<feature type="transmembrane region" description="Helical" evidence="2">
    <location>
        <begin position="131"/>
        <end position="151"/>
    </location>
</feature>
<feature type="topological domain" description="Cytoplasmic" evidence="7">
    <location>
        <begin position="152"/>
        <end position="162"/>
    </location>
</feature>
<feature type="transmembrane region" description="Helical" evidence="2">
    <location>
        <begin position="163"/>
        <end position="183"/>
    </location>
</feature>
<feature type="topological domain" description="Extracellular" evidence="7">
    <location>
        <begin position="184"/>
        <end position="210"/>
    </location>
</feature>
<feature type="transmembrane region" description="Helical" evidence="2">
    <location>
        <begin position="211"/>
        <end position="231"/>
    </location>
</feature>
<feature type="topological domain" description="Cytoplasmic" evidence="7">
    <location>
        <begin position="232"/>
        <end position="294"/>
    </location>
</feature>
<feature type="transmembrane region" description="Helical" evidence="2">
    <location>
        <begin position="295"/>
        <end position="315"/>
    </location>
</feature>
<feature type="topological domain" description="Extracellular" evidence="7">
    <location>
        <begin position="316"/>
        <end position="346"/>
    </location>
</feature>
<feature type="transmembrane region" description="Helical" evidence="2">
    <location>
        <begin position="347"/>
        <end position="367"/>
    </location>
</feature>
<feature type="topological domain" description="Cytoplasmic" evidence="7">
    <location>
        <begin position="368"/>
        <end position="369"/>
    </location>
</feature>
<feature type="transmembrane region" description="Helical" evidence="2">
    <location>
        <begin position="370"/>
        <end position="390"/>
    </location>
</feature>
<feature type="topological domain" description="Extracellular" evidence="7">
    <location>
        <begin position="391"/>
        <end position="414"/>
    </location>
</feature>
<feature type="transmembrane region" description="Helical" evidence="2">
    <location>
        <begin position="415"/>
        <end position="435"/>
    </location>
</feature>
<feature type="topological domain" description="Cytoplasmic" evidence="7">
    <location>
        <begin position="436"/>
        <end position="457"/>
    </location>
</feature>
<feature type="transmembrane region" description="Helical" evidence="2">
    <location>
        <begin position="458"/>
        <end position="478"/>
    </location>
</feature>
<feature type="topological domain" description="Extracellular" evidence="7">
    <location>
        <begin position="479"/>
        <end position="490"/>
    </location>
</feature>
<feature type="transmembrane region" description="Helical" evidence="2">
    <location>
        <begin position="491"/>
        <end position="511"/>
    </location>
</feature>
<feature type="topological domain" description="Cytoplasmic" evidence="7">
    <location>
        <begin position="512"/>
        <end position="557"/>
    </location>
</feature>
<feature type="region of interest" description="Disordered" evidence="4">
    <location>
        <begin position="519"/>
        <end position="557"/>
    </location>
</feature>
<feature type="compositionally biased region" description="Polar residues" evidence="4">
    <location>
        <begin position="543"/>
        <end position="557"/>
    </location>
</feature>
<feature type="glycosylation site" description="N-linked (GlcNAc...) asparagine" evidence="3">
    <location>
        <position position="406"/>
    </location>
</feature>
<proteinExistence type="evidence at transcript level"/>
<organism>
    <name type="scientific">Medicago truncatula</name>
    <name type="common">Barrel medic</name>
    <name type="synonym">Medicago tribuloides</name>
    <dbReference type="NCBI Taxonomy" id="3880"/>
    <lineage>
        <taxon>Eukaryota</taxon>
        <taxon>Viridiplantae</taxon>
        <taxon>Streptophyta</taxon>
        <taxon>Embryophyta</taxon>
        <taxon>Tracheophyta</taxon>
        <taxon>Spermatophyta</taxon>
        <taxon>Magnoliopsida</taxon>
        <taxon>eudicotyledons</taxon>
        <taxon>Gunneridae</taxon>
        <taxon>Pentapetalae</taxon>
        <taxon>rosids</taxon>
        <taxon>fabids</taxon>
        <taxon>Fabales</taxon>
        <taxon>Fabaceae</taxon>
        <taxon>Papilionoideae</taxon>
        <taxon>50 kb inversion clade</taxon>
        <taxon>NPAAA clade</taxon>
        <taxon>Hologalegina</taxon>
        <taxon>IRL clade</taxon>
        <taxon>Trifolieae</taxon>
        <taxon>Medicago</taxon>
    </lineage>
</organism>
<sequence>MATSHGVLRSLDNAKTQSYHYLAIVIAGMGFFTDAYDLFCITAVTKLIGRLYYSDPTNHSPGILPTNVNNAITGVALCGTLAGQLFFGWLGDKLGRKKVYGITLTTMVGFALLSGLSFGSTPKTVVTSLCFFRFWLGFGIGGDYPLSAVIMSEYANQKTRGSFIAAVFAMQGVGILVAGGVAMFVSKLFLLYFPAPDFETDAVLSTQPEGDFVWRIVLMFGAVPAALTYYWRMKMPETARYTALVEGDHKKAVEDMAKVLDRNILSEESNTRIAIRPLESHSYGLFSSEFLNRHGLHLLGTTSTWFLLDIAFYSLQLTQKDIYPTSGLVYKASKMNAIEEVFQLSRAMFAVALIATVPGYWCTVFLIEKIGRFRIQLIGFLVMSVCMWFLGHNYRSFRGEESACKNGSKYSFCNGNPVMFAILFGLTLFFANFGPNSTTFIVPAELFPARLRSTCHGISAAAGKSGAIVGAFGVQSYIGNSHDKSKGTKQAIMALAVVNLLGFFFTFLVPETQGRSLEEISGEEKDFQGNNADEEISGERNGTRNASVDKSPETSMV</sequence>
<evidence type="ECO:0000250" key="1">
    <source>
        <dbReference type="UniProtKB" id="Q8GSG4"/>
    </source>
</evidence>
<evidence type="ECO:0000255" key="2"/>
<evidence type="ECO:0000255" key="3">
    <source>
        <dbReference type="PROSITE-ProRule" id="PRU00498"/>
    </source>
</evidence>
<evidence type="ECO:0000256" key="4">
    <source>
        <dbReference type="SAM" id="MobiDB-lite"/>
    </source>
</evidence>
<evidence type="ECO:0000269" key="5">
    <source>
    </source>
</evidence>
<evidence type="ECO:0000303" key="6">
    <source>
    </source>
</evidence>
<evidence type="ECO:0000305" key="7"/>
<evidence type="ECO:0000312" key="8">
    <source>
        <dbReference type="EMBL" id="AES98403.1"/>
    </source>
</evidence>
<evidence type="ECO:0000312" key="9">
    <source>
        <dbReference type="EMBL" id="RHN56345.1"/>
    </source>
</evidence>
<keyword id="KW-1003">Cell membrane</keyword>
<keyword id="KW-0325">Glycoprotein</keyword>
<keyword id="KW-0378">Hydrolase</keyword>
<keyword id="KW-0472">Membrane</keyword>
<keyword id="KW-0592">Phosphate transport</keyword>
<keyword id="KW-1185">Reference proteome</keyword>
<keyword id="KW-0769">Symport</keyword>
<keyword id="KW-0812">Transmembrane</keyword>
<keyword id="KW-1133">Transmembrane helix</keyword>
<keyword id="KW-0813">Transport</keyword>
<dbReference type="EMBL" id="CM001221">
    <property type="protein sequence ID" value="AES98403.1"/>
    <property type="molecule type" value="Genomic_DNA"/>
</dbReference>
<dbReference type="EMBL" id="PSQE01000005">
    <property type="protein sequence ID" value="RHN56345.1"/>
    <property type="molecule type" value="Genomic_DNA"/>
</dbReference>
<dbReference type="SMR" id="G7KDA1"/>
<dbReference type="STRING" id="3880.G7KDA1"/>
<dbReference type="GlyCosmos" id="G7KDA1">
    <property type="glycosylation" value="1 site, No reported glycans"/>
</dbReference>
<dbReference type="PaxDb" id="3880-AES98403"/>
<dbReference type="EnsemblPlants" id="rna31730">
    <property type="protein sequence ID" value="RHN56345.1"/>
    <property type="gene ID" value="gene31730"/>
</dbReference>
<dbReference type="GeneID" id="11405771"/>
<dbReference type="Gramene" id="rna31730">
    <property type="protein sequence ID" value="RHN56345.1"/>
    <property type="gene ID" value="gene31730"/>
</dbReference>
<dbReference type="KEGG" id="mtr:11405771"/>
<dbReference type="eggNOG" id="KOG0252">
    <property type="taxonomic scope" value="Eukaryota"/>
</dbReference>
<dbReference type="HOGENOM" id="CLU_001265_46_14_1"/>
<dbReference type="OMA" id="VEGDHKK"/>
<dbReference type="OrthoDB" id="433512at2759"/>
<dbReference type="Proteomes" id="UP000002051">
    <property type="component" value="Chromosome 5"/>
</dbReference>
<dbReference type="Proteomes" id="UP000265566">
    <property type="component" value="Chromosome 5"/>
</dbReference>
<dbReference type="GO" id="GO:0085042">
    <property type="term" value="C:periarbuscular membrane"/>
    <property type="evidence" value="ECO:0000314"/>
    <property type="project" value="UniProtKB"/>
</dbReference>
<dbReference type="GO" id="GO:0005886">
    <property type="term" value="C:plasma membrane"/>
    <property type="evidence" value="ECO:0007669"/>
    <property type="project" value="UniProtKB-SubCell"/>
</dbReference>
<dbReference type="GO" id="GO:0016787">
    <property type="term" value="F:hydrolase activity"/>
    <property type="evidence" value="ECO:0007669"/>
    <property type="project" value="UniProtKB-KW"/>
</dbReference>
<dbReference type="GO" id="GO:0015293">
    <property type="term" value="F:symporter activity"/>
    <property type="evidence" value="ECO:0007669"/>
    <property type="project" value="UniProtKB-KW"/>
</dbReference>
<dbReference type="GO" id="GO:0036377">
    <property type="term" value="P:arbuscular mycorrhizal association"/>
    <property type="evidence" value="ECO:0000315"/>
    <property type="project" value="UniProtKB"/>
</dbReference>
<dbReference type="GO" id="GO:0043562">
    <property type="term" value="P:cellular response to nitrogen levels"/>
    <property type="evidence" value="ECO:0000315"/>
    <property type="project" value="UniProtKB"/>
</dbReference>
<dbReference type="GO" id="GO:0006817">
    <property type="term" value="P:phosphate ion transport"/>
    <property type="evidence" value="ECO:0000315"/>
    <property type="project" value="UniProtKB"/>
</dbReference>
<dbReference type="GO" id="GO:0009610">
    <property type="term" value="P:response to symbiotic fungus"/>
    <property type="evidence" value="ECO:0000270"/>
    <property type="project" value="UniProtKB"/>
</dbReference>
<dbReference type="GO" id="GO:0055085">
    <property type="term" value="P:transmembrane transport"/>
    <property type="evidence" value="ECO:0000314"/>
    <property type="project" value="UniProtKB"/>
</dbReference>
<dbReference type="CDD" id="cd17364">
    <property type="entry name" value="MFS_PhT"/>
    <property type="match status" value="1"/>
</dbReference>
<dbReference type="FunFam" id="1.20.1250.20:FF:000175">
    <property type="entry name" value="Inorganic phosphate transporter 1-6"/>
    <property type="match status" value="1"/>
</dbReference>
<dbReference type="Gene3D" id="1.20.1250.20">
    <property type="entry name" value="MFS general substrate transporter like domains"/>
    <property type="match status" value="2"/>
</dbReference>
<dbReference type="InterPro" id="IPR020846">
    <property type="entry name" value="MFS_dom"/>
</dbReference>
<dbReference type="InterPro" id="IPR005828">
    <property type="entry name" value="MFS_sugar_transport-like"/>
</dbReference>
<dbReference type="InterPro" id="IPR036259">
    <property type="entry name" value="MFS_trans_sf"/>
</dbReference>
<dbReference type="PANTHER" id="PTHR24064">
    <property type="entry name" value="SOLUTE CARRIER FAMILY 22 MEMBER"/>
    <property type="match status" value="1"/>
</dbReference>
<dbReference type="Pfam" id="PF00083">
    <property type="entry name" value="Sugar_tr"/>
    <property type="match status" value="1"/>
</dbReference>
<dbReference type="SUPFAM" id="SSF103473">
    <property type="entry name" value="MFS general substrate transporter"/>
    <property type="match status" value="1"/>
</dbReference>
<dbReference type="PROSITE" id="PS50850">
    <property type="entry name" value="MFS"/>
    <property type="match status" value="1"/>
</dbReference>
<reference key="1">
    <citation type="journal article" date="2011" name="Nature">
        <title>The Medicago genome provides insight into the evolution of rhizobial symbioses.</title>
        <authorList>
            <person name="Young N.D."/>
            <person name="Debelle F."/>
            <person name="Oldroyd G.E.D."/>
            <person name="Geurts R."/>
            <person name="Cannon S.B."/>
            <person name="Udvardi M.K."/>
            <person name="Benedito V.A."/>
            <person name="Mayer K.F.X."/>
            <person name="Gouzy J."/>
            <person name="Schoof H."/>
            <person name="Van de Peer Y."/>
            <person name="Proost S."/>
            <person name="Cook D.R."/>
            <person name="Meyers B.C."/>
            <person name="Spannagl M."/>
            <person name="Cheung F."/>
            <person name="De Mita S."/>
            <person name="Krishnakumar V."/>
            <person name="Gundlach H."/>
            <person name="Zhou S."/>
            <person name="Mudge J."/>
            <person name="Bharti A.K."/>
            <person name="Murray J.D."/>
            <person name="Naoumkina M.A."/>
            <person name="Rosen B."/>
            <person name="Silverstein K.A.T."/>
            <person name="Tang H."/>
            <person name="Rombauts S."/>
            <person name="Zhao P.X."/>
            <person name="Zhou P."/>
            <person name="Barbe V."/>
            <person name="Bardou P."/>
            <person name="Bechner M."/>
            <person name="Bellec A."/>
            <person name="Berger A."/>
            <person name="Berges H."/>
            <person name="Bidwell S."/>
            <person name="Bisseling T."/>
            <person name="Choisne N."/>
            <person name="Couloux A."/>
            <person name="Denny R."/>
            <person name="Deshpande S."/>
            <person name="Dai X."/>
            <person name="Doyle J.J."/>
            <person name="Dudez A.-M."/>
            <person name="Farmer A.D."/>
            <person name="Fouteau S."/>
            <person name="Franken C."/>
            <person name="Gibelin C."/>
            <person name="Gish J."/>
            <person name="Goldstein S."/>
            <person name="Gonzalez A.J."/>
            <person name="Green P.J."/>
            <person name="Hallab A."/>
            <person name="Hartog M."/>
            <person name="Hua A."/>
            <person name="Humphray S.J."/>
            <person name="Jeong D.-H."/>
            <person name="Jing Y."/>
            <person name="Jocker A."/>
            <person name="Kenton S.M."/>
            <person name="Kim D.-J."/>
            <person name="Klee K."/>
            <person name="Lai H."/>
            <person name="Lang C."/>
            <person name="Lin S."/>
            <person name="Macmil S.L."/>
            <person name="Magdelenat G."/>
            <person name="Matthews L."/>
            <person name="McCorrison J."/>
            <person name="Monaghan E.L."/>
            <person name="Mun J.-H."/>
            <person name="Najar F.Z."/>
            <person name="Nicholson C."/>
            <person name="Noirot C."/>
            <person name="O'Bleness M."/>
            <person name="Paule C.R."/>
            <person name="Poulain J."/>
            <person name="Prion F."/>
            <person name="Qin B."/>
            <person name="Qu C."/>
            <person name="Retzel E.F."/>
            <person name="Riddle C."/>
            <person name="Sallet E."/>
            <person name="Samain S."/>
            <person name="Samson N."/>
            <person name="Sanders I."/>
            <person name="Saurat O."/>
            <person name="Scarpelli C."/>
            <person name="Schiex T."/>
            <person name="Segurens B."/>
            <person name="Severin A.J."/>
            <person name="Sherrier D.J."/>
            <person name="Shi R."/>
            <person name="Sims S."/>
            <person name="Singer S.R."/>
            <person name="Sinharoy S."/>
            <person name="Sterck L."/>
            <person name="Viollet A."/>
            <person name="Wang B.-B."/>
            <person name="Wang K."/>
            <person name="Wang M."/>
            <person name="Wang X."/>
            <person name="Warfsmann J."/>
            <person name="Weissenbach J."/>
            <person name="White D.D."/>
            <person name="White J.D."/>
            <person name="Wiley G.B."/>
            <person name="Wincker P."/>
            <person name="Xing Y."/>
            <person name="Yang L."/>
            <person name="Yao Z."/>
            <person name="Ying F."/>
            <person name="Zhai J."/>
            <person name="Zhou L."/>
            <person name="Zuber A."/>
            <person name="Denarie J."/>
            <person name="Dixon R.A."/>
            <person name="May G.D."/>
            <person name="Schwartz D.C."/>
            <person name="Rogers J."/>
            <person name="Quetier F."/>
            <person name="Town C.D."/>
            <person name="Roe B.A."/>
        </authorList>
    </citation>
    <scope>NUCLEOTIDE SEQUENCE [LARGE SCALE GENOMIC DNA]</scope>
    <source>
        <strain>cv. Jemalong A17</strain>
    </source>
</reference>
<reference key="2">
    <citation type="journal article" date="2014" name="BMC Genomics">
        <title>An improved genome release (version Mt4.0) for the model legume Medicago truncatula.</title>
        <authorList>
            <person name="Tang H."/>
            <person name="Krishnakumar V."/>
            <person name="Bidwell S."/>
            <person name="Rosen B."/>
            <person name="Chan A."/>
            <person name="Zhou S."/>
            <person name="Gentzbittel L."/>
            <person name="Childs K.L."/>
            <person name="Yandell M."/>
            <person name="Gundlach H."/>
            <person name="Mayer K.F."/>
            <person name="Schwartz D.C."/>
            <person name="Town C.D."/>
        </authorList>
    </citation>
    <scope>GENOME REANNOTATION</scope>
    <source>
        <strain>cv. Jemalong A17</strain>
    </source>
</reference>
<reference key="3">
    <citation type="journal article" date="2018" name="Nat. Plants">
        <title>Whole-genome landscape of Medicago truncatula symbiotic genes.</title>
        <authorList>
            <person name="Pecrix Y."/>
            <person name="Staton S.E."/>
            <person name="Sallet E."/>
            <person name="Lelandais-Briere C."/>
            <person name="Moreau S."/>
            <person name="Carrere S."/>
            <person name="Blein T."/>
            <person name="Jardinaud M.F."/>
            <person name="Latrasse D."/>
            <person name="Zouine M."/>
            <person name="Zahm M."/>
            <person name="Kreplak J."/>
            <person name="Mayjonade B."/>
            <person name="Satge C."/>
            <person name="Perez M."/>
            <person name="Cauet S."/>
            <person name="Marande W."/>
            <person name="Chantry-Darmon C."/>
            <person name="Lopez-Roques C."/>
            <person name="Bouchez O."/>
            <person name="Berard A."/>
            <person name="Debelle F."/>
            <person name="Munos S."/>
            <person name="Bendahmane A."/>
            <person name="Berges H."/>
            <person name="Niebel A."/>
            <person name="Buitink J."/>
            <person name="Frugier F."/>
            <person name="Benhamed M."/>
            <person name="Crespi M."/>
            <person name="Gouzy J."/>
            <person name="Gamas P."/>
        </authorList>
    </citation>
    <scope>NUCLEOTIDE SEQUENCE [LARGE SCALE GENOMIC DNA]</scope>
    <source>
        <strain>cv. Jemalong A17</strain>
    </source>
</reference>
<reference key="4">
    <citation type="journal article" date="2015" name="Plant Cell">
        <title>Suppression of arbuscule degeneration in Medicago truncatula phosphate transporter4 mutants is dependent on the ammonium transporter 2 family protein AMT2;3.</title>
        <authorList>
            <person name="Breuillin-Sessoms F."/>
            <person name="Floss D.S."/>
            <person name="Gomez S.K."/>
            <person name="Pumplin N."/>
            <person name="Ding Y."/>
            <person name="Levesque-Tremblay V."/>
            <person name="Noar R.D."/>
            <person name="Daniels D.A."/>
            <person name="Bravo A."/>
            <person name="Eaglesham J.B."/>
            <person name="Benedito V.A."/>
            <person name="Udvardi M.K."/>
            <person name="Harrison M.J."/>
        </authorList>
    </citation>
    <scope>FUNCTION</scope>
    <scope>DISRUPTION PHENOTYPE</scope>
    <scope>INDUCTION BY ARBUSCULAR MYCORRHIZAL FUNGI</scope>
    <scope>DEVELOPMENTAL STAGE</scope>
    <scope>SUBCELLULAR LOCATION</scope>
    <source>
        <strain>cv. Jemalong A17</strain>
    </source>
</reference>
<accession>G7KDA1</accession>
<protein>
    <recommendedName>
        <fullName evidence="6">Low affinity inorganic phosphate transporter 8</fullName>
        <shortName evidence="6">MtPT8</shortName>
        <shortName evidence="7">MtPht1;8</shortName>
    </recommendedName>
    <alternativeName>
        <fullName evidence="7">Arbuscular mycorrhiza-induced phosphate transporter PT8</fullName>
        <shortName evidence="7">AM-induced phosphate transporter PT8</shortName>
    </alternativeName>
    <alternativeName>
        <fullName evidence="7">H(+)/Pi cotransporter PT8</fullName>
    </alternativeName>
</protein>
<comment type="function">
    <text evidence="5">Low-affinity transporter for external inorganic phosphate (Pi) that may be involved in the acquisition of phosphate released by arbuscular mycorrhizal (AM) fungi (e.g. Glomus versiforme and G.intraradices) during AM symbiosis; not required for mycorrhizal arbuscule development.</text>
</comment>
<comment type="catalytic activity">
    <reaction evidence="1">
        <text>phosphate(in) + H(+)(in) = phosphate(out) + H(+)(out)</text>
        <dbReference type="Rhea" id="RHEA:29939"/>
        <dbReference type="ChEBI" id="CHEBI:15378"/>
        <dbReference type="ChEBI" id="CHEBI:43474"/>
    </reaction>
    <physiologicalReaction direction="right-to-left" evidence="1">
        <dbReference type="Rhea" id="RHEA:29941"/>
    </physiologicalReaction>
</comment>
<comment type="subcellular location">
    <subcellularLocation>
        <location evidence="5">Cell membrane</location>
        <topology evidence="2">Multi-pass membrane protein</topology>
    </subcellularLocation>
    <text evidence="5">Present on the periarbuscular membrane in cells containing arbuscules during arbuscular mycorrhizal (AM) symbiosis with AM fungi.</text>
</comment>
<comment type="developmental stage">
    <text evidence="5">During arbuscular mycorrhizal (AM) symbiosis with AM fungi, accumulates exclusively in cortical cells harboring arbuscules.</text>
</comment>
<comment type="induction">
    <text evidence="5">Accumulates in roots during colonization by arbuscular mycorrhizal (AM) fungi (e.g. Glomus versiforme).</text>
</comment>
<comment type="disruption phenotype">
    <text evidence="5">Normal arbuscular mycorrhizal (AM) symbiosis with AM fungi (PubMed:25841038). Plants missing both PT4 and PT8 fail to establish AM symbiosis with AM fungi in high nitrogen conditions, leading to premature arbuscule degeneration (PAD); these phenotypes are suppressed in nitrogen-deprived conditions in an AMT2-3-dependent manner (PubMed:25841038).</text>
</comment>
<comment type="miscellaneous">
    <text evidence="7">Although related to the sugar transporter family, it does not transport sugars.</text>
</comment>
<comment type="similarity">
    <text evidence="7">Belongs to the major facilitator superfamily. Phosphate:H(+) symporter (TC 2.A.1.9) family.</text>
</comment>
<name>PHT18_MEDTR</name>